<dbReference type="EMBL" id="AE013598">
    <property type="protein sequence ID" value="AAW77412.1"/>
    <property type="molecule type" value="Genomic_DNA"/>
</dbReference>
<dbReference type="SMR" id="Q5GV61"/>
<dbReference type="STRING" id="291331.XOO4158"/>
<dbReference type="KEGG" id="xoo:XOO4158"/>
<dbReference type="HOGENOM" id="CLU_075053_3_5_6"/>
<dbReference type="Proteomes" id="UP000006735">
    <property type="component" value="Chromosome"/>
</dbReference>
<dbReference type="GO" id="GO:0005829">
    <property type="term" value="C:cytosol"/>
    <property type="evidence" value="ECO:0007669"/>
    <property type="project" value="TreeGrafter"/>
</dbReference>
<dbReference type="GO" id="GO:0003824">
    <property type="term" value="F:catalytic activity"/>
    <property type="evidence" value="ECO:0007669"/>
    <property type="project" value="UniProtKB-KW"/>
</dbReference>
<dbReference type="GO" id="GO:0035438">
    <property type="term" value="F:cyclic-di-GMP binding"/>
    <property type="evidence" value="ECO:0000250"/>
    <property type="project" value="UniProtKB"/>
</dbReference>
<dbReference type="GO" id="GO:0003677">
    <property type="term" value="F:DNA binding"/>
    <property type="evidence" value="ECO:0000250"/>
    <property type="project" value="UniProtKB"/>
</dbReference>
<dbReference type="GO" id="GO:0003700">
    <property type="term" value="F:DNA-binding transcription factor activity"/>
    <property type="evidence" value="ECO:0000250"/>
    <property type="project" value="UniProtKB"/>
</dbReference>
<dbReference type="GO" id="GO:0046983">
    <property type="term" value="F:protein dimerization activity"/>
    <property type="evidence" value="ECO:0000250"/>
    <property type="project" value="UniProtKB"/>
</dbReference>
<dbReference type="GO" id="GO:0006355">
    <property type="term" value="P:regulation of DNA-templated transcription"/>
    <property type="evidence" value="ECO:0000250"/>
    <property type="project" value="UniProtKB"/>
</dbReference>
<dbReference type="CDD" id="cd00038">
    <property type="entry name" value="CAP_ED"/>
    <property type="match status" value="1"/>
</dbReference>
<dbReference type="FunFam" id="1.10.10.10:FF:000006">
    <property type="entry name" value="cAMP-activated global transcriptional regulator CRP"/>
    <property type="match status" value="1"/>
</dbReference>
<dbReference type="FunFam" id="2.60.120.10:FF:000100">
    <property type="entry name" value="CRP-like protein Clp"/>
    <property type="match status" value="1"/>
</dbReference>
<dbReference type="Gene3D" id="2.60.120.10">
    <property type="entry name" value="Jelly Rolls"/>
    <property type="match status" value="1"/>
</dbReference>
<dbReference type="Gene3D" id="1.10.10.10">
    <property type="entry name" value="Winged helix-like DNA-binding domain superfamily/Winged helix DNA-binding domain"/>
    <property type="match status" value="1"/>
</dbReference>
<dbReference type="InterPro" id="IPR000595">
    <property type="entry name" value="cNMP-bd_dom"/>
</dbReference>
<dbReference type="InterPro" id="IPR018490">
    <property type="entry name" value="cNMP-bd_dom_sf"/>
</dbReference>
<dbReference type="InterPro" id="IPR050397">
    <property type="entry name" value="Env_Response_Regulators"/>
</dbReference>
<dbReference type="InterPro" id="IPR012318">
    <property type="entry name" value="HTH_CRP"/>
</dbReference>
<dbReference type="InterPro" id="IPR014710">
    <property type="entry name" value="RmlC-like_jellyroll"/>
</dbReference>
<dbReference type="InterPro" id="IPR018335">
    <property type="entry name" value="Tscrpt_reg_HTH_Crp-type_CS"/>
</dbReference>
<dbReference type="InterPro" id="IPR036388">
    <property type="entry name" value="WH-like_DNA-bd_sf"/>
</dbReference>
<dbReference type="InterPro" id="IPR036390">
    <property type="entry name" value="WH_DNA-bd_sf"/>
</dbReference>
<dbReference type="NCBIfam" id="NF008732">
    <property type="entry name" value="PRK11753.1"/>
    <property type="match status" value="1"/>
</dbReference>
<dbReference type="PANTHER" id="PTHR24567">
    <property type="entry name" value="CRP FAMILY TRANSCRIPTIONAL REGULATORY PROTEIN"/>
    <property type="match status" value="1"/>
</dbReference>
<dbReference type="PANTHER" id="PTHR24567:SF68">
    <property type="entry name" value="DNA-BINDING TRANSCRIPTIONAL DUAL REGULATOR CRP"/>
    <property type="match status" value="1"/>
</dbReference>
<dbReference type="Pfam" id="PF00027">
    <property type="entry name" value="cNMP_binding"/>
    <property type="match status" value="1"/>
</dbReference>
<dbReference type="Pfam" id="PF00325">
    <property type="entry name" value="Crp"/>
    <property type="match status" value="1"/>
</dbReference>
<dbReference type="PRINTS" id="PR00034">
    <property type="entry name" value="HTHCRP"/>
</dbReference>
<dbReference type="SMART" id="SM00100">
    <property type="entry name" value="cNMP"/>
    <property type="match status" value="1"/>
</dbReference>
<dbReference type="SMART" id="SM00419">
    <property type="entry name" value="HTH_CRP"/>
    <property type="match status" value="1"/>
</dbReference>
<dbReference type="SUPFAM" id="SSF51206">
    <property type="entry name" value="cAMP-binding domain-like"/>
    <property type="match status" value="1"/>
</dbReference>
<dbReference type="SUPFAM" id="SSF46785">
    <property type="entry name" value="Winged helix' DNA-binding domain"/>
    <property type="match status" value="1"/>
</dbReference>
<dbReference type="PROSITE" id="PS50042">
    <property type="entry name" value="CNMP_BINDING_3"/>
    <property type="match status" value="1"/>
</dbReference>
<dbReference type="PROSITE" id="PS00042">
    <property type="entry name" value="HTH_CRP_1"/>
    <property type="match status" value="1"/>
</dbReference>
<dbReference type="PROSITE" id="PS51063">
    <property type="entry name" value="HTH_CRP_2"/>
    <property type="match status" value="1"/>
</dbReference>
<gene>
    <name type="primary">clp</name>
    <name type="ordered locus">XOO4158</name>
</gene>
<comment type="function">
    <text evidence="1">Global transcriptional regulator that regulates virulence factors production by activating or repressing the expression of a large set of genes in diffusible signal factor (DSF) pathway.</text>
</comment>
<comment type="activity regulation">
    <text evidence="1">Allosterically inhibited by cyclic di-GMP (c-di-GMP), which binds to Clp and abolishes its ability to bind its target gene promoter.</text>
</comment>
<comment type="subunit">
    <text evidence="1">Homodimer.</text>
</comment>
<comment type="subcellular location">
    <subcellularLocation>
        <location evidence="3">Cytoplasm</location>
    </subcellularLocation>
</comment>
<comment type="domain">
    <text evidence="1">Binding of c-di-GMP appears to trigger the active Clp conformation into an open form or inactive state, hence abolishing its DNA-binding ability.</text>
</comment>
<feature type="chain" id="PRO_0000405705" description="CRP-like protein Clp">
    <location>
        <begin position="1"/>
        <end position="230"/>
    </location>
</feature>
<feature type="domain" description="HTH crp-type" evidence="2">
    <location>
        <begin position="158"/>
        <end position="230"/>
    </location>
</feature>
<feature type="DNA-binding region" description="H-T-H motif" evidence="2">
    <location>
        <begin position="190"/>
        <end position="209"/>
    </location>
</feature>
<feature type="binding site">
    <location>
        <begin position="18"/>
        <end position="139"/>
    </location>
    <ligand>
        <name>a nucleoside 3',5'-cyclic phosphate</name>
        <dbReference type="ChEBI" id="CHEBI:58464"/>
    </ligand>
</feature>
<evidence type="ECO:0000250" key="1"/>
<evidence type="ECO:0000255" key="2">
    <source>
        <dbReference type="PROSITE-ProRule" id="PRU00387"/>
    </source>
</evidence>
<evidence type="ECO:0000305" key="3"/>
<protein>
    <recommendedName>
        <fullName>CRP-like protein Clp</fullName>
    </recommendedName>
    <alternativeName>
        <fullName>Catabolite activation-like protein</fullName>
        <shortName>CAP-like</shortName>
    </alternativeName>
</protein>
<organism>
    <name type="scientific">Xanthomonas oryzae pv. oryzae (strain KACC10331 / KXO85)</name>
    <dbReference type="NCBI Taxonomy" id="291331"/>
    <lineage>
        <taxon>Bacteria</taxon>
        <taxon>Pseudomonadati</taxon>
        <taxon>Pseudomonadota</taxon>
        <taxon>Gammaproteobacteria</taxon>
        <taxon>Lysobacterales</taxon>
        <taxon>Lysobacteraceae</taxon>
        <taxon>Xanthomonas</taxon>
    </lineage>
</organism>
<proteinExistence type="inferred from homology"/>
<keyword id="KW-0010">Activator</keyword>
<keyword id="KW-0021">Allosteric enzyme</keyword>
<keyword id="KW-0973">c-di-GMP</keyword>
<keyword id="KW-0963">Cytoplasm</keyword>
<keyword id="KW-0238">DNA-binding</keyword>
<keyword id="KW-1185">Reference proteome</keyword>
<keyword id="KW-0678">Repressor</keyword>
<keyword id="KW-0804">Transcription</keyword>
<keyword id="KW-0805">Transcription regulation</keyword>
<keyword id="KW-0843">Virulence</keyword>
<sequence>MSSANTTVVTTTVRNATPSLALDAGTIERFLAHSHRRRYPTRTDVFRPGDPAGTLYYVISGSVSIIAEEDDDRELVLGYFGSGEFVGEMGLFIESDTREVILRTRTQCELAEISYERLQQLFQTSLSPDAPKILYAIGVQLSKRLLDTTRKASRLAFLDVTDRIVRTLHDLSKEPEAMSHPQGTQLRVSRQELARLVGCSREMAGRVLKKLQADGLLHARGKTVVLYGTR</sequence>
<name>CLP_XANOR</name>
<reference key="1">
    <citation type="journal article" date="2005" name="Nucleic Acids Res.">
        <title>The genome sequence of Xanthomonas oryzae pathovar oryzae KACC10331, the bacterial blight pathogen of rice.</title>
        <authorList>
            <person name="Lee B.-M."/>
            <person name="Park Y.-J."/>
            <person name="Park D.-S."/>
            <person name="Kang H.-W."/>
            <person name="Kim J.-G."/>
            <person name="Song E.-S."/>
            <person name="Park I.-C."/>
            <person name="Yoon U.-H."/>
            <person name="Hahn J.-H."/>
            <person name="Koo B.-S."/>
            <person name="Lee G.-B."/>
            <person name="Kim H."/>
            <person name="Park H.-S."/>
            <person name="Yoon K.-O."/>
            <person name="Kim J.-H."/>
            <person name="Jung C.-H."/>
            <person name="Koh N.-H."/>
            <person name="Seo J.-S."/>
            <person name="Go S.-J."/>
        </authorList>
    </citation>
    <scope>NUCLEOTIDE SEQUENCE [LARGE SCALE GENOMIC DNA]</scope>
    <source>
        <strain>KACC10331 / KXO85</strain>
    </source>
</reference>
<accession>Q5GV61</accession>